<keyword id="KW-0238">DNA-binding</keyword>
<keyword id="KW-0539">Nucleus</keyword>
<keyword id="KW-1185">Reference proteome</keyword>
<keyword id="KW-0804">Transcription</keyword>
<keyword id="KW-0805">Transcription regulation</keyword>
<name>PTF1A_XENLA</name>
<gene>
    <name type="primary">ptf1a</name>
</gene>
<proteinExistence type="evidence at transcript level"/>
<evidence type="ECO:0000255" key="1">
    <source>
        <dbReference type="PROSITE-ProRule" id="PRU00981"/>
    </source>
</evidence>
<evidence type="ECO:0000269" key="2">
    <source ref="1"/>
</evidence>
<protein>
    <recommendedName>
        <fullName>Pancreas transcription factor 1 subunit alpha</fullName>
    </recommendedName>
    <alternativeName>
        <fullName>Pancreas-specific transcription factor 1a</fullName>
    </alternativeName>
    <alternativeName>
        <fullName>Transcription factor Ptf1a/p48</fullName>
    </alternativeName>
</protein>
<comment type="function">
    <text evidence="2">Transcription factor implicated in the cell fate determination in various organs. Binds to the E-box consensus sequence 5'-CANNTG-3'. Acts together with pdx1 to induce the pancreatic lineage within the endoderm. Plays a central role in directing the differentiation of retinal progenitors towards horizontal and amacrine fates.</text>
</comment>
<comment type="subcellular location">
    <subcellularLocation>
        <location evidence="1">Nucleus</location>
    </subcellularLocation>
</comment>
<feature type="chain" id="PRO_0000233147" description="Pancreas transcription factor 1 subunit alpha">
    <location>
        <begin position="1"/>
        <end position="270"/>
    </location>
</feature>
<feature type="domain" description="bHLH" evidence="1">
    <location>
        <begin position="119"/>
        <end position="171"/>
    </location>
</feature>
<reference key="1">
    <citation type="submission" date="2005-04" db="EMBL/GenBank/DDBJ databases">
        <title>Combined ectopic expression of Pdx1 and Ptf1a/p48 results in the stable conversion of posterior endoderm into endo- and exocrine pancreatic tissue.</title>
        <authorList>
            <person name="Afelik S."/>
            <person name="Chen Y."/>
            <person name="Pieler T."/>
        </authorList>
    </citation>
    <scope>NUCLEOTIDE SEQUENCE [MRNA]</scope>
    <scope>FUNCTION</scope>
</reference>
<accession>Q4ZHW1</accession>
<organism>
    <name type="scientific">Xenopus laevis</name>
    <name type="common">African clawed frog</name>
    <dbReference type="NCBI Taxonomy" id="8355"/>
    <lineage>
        <taxon>Eukaryota</taxon>
        <taxon>Metazoa</taxon>
        <taxon>Chordata</taxon>
        <taxon>Craniata</taxon>
        <taxon>Vertebrata</taxon>
        <taxon>Euteleostomi</taxon>
        <taxon>Amphibia</taxon>
        <taxon>Batrachia</taxon>
        <taxon>Anura</taxon>
        <taxon>Pipoidea</taxon>
        <taxon>Pipidae</taxon>
        <taxon>Xenopodinae</taxon>
        <taxon>Xenopus</taxon>
        <taxon>Xenopus</taxon>
    </lineage>
</organism>
<dbReference type="EMBL" id="DQ007931">
    <property type="protein sequence ID" value="AAY23360.1"/>
    <property type="molecule type" value="mRNA"/>
</dbReference>
<dbReference type="RefSeq" id="NP_001167491.1">
    <property type="nucleotide sequence ID" value="NM_001174020.1"/>
</dbReference>
<dbReference type="SMR" id="Q4ZHW1"/>
<dbReference type="GeneID" id="100381084"/>
<dbReference type="KEGG" id="xla:100381084"/>
<dbReference type="AGR" id="Xenbase:XB-GENE-6466546"/>
<dbReference type="CTD" id="100381084"/>
<dbReference type="Xenbase" id="XB-GENE-6466546">
    <property type="gene designation" value="ptf1a.L"/>
</dbReference>
<dbReference type="OMA" id="GYCCEAA"/>
<dbReference type="OrthoDB" id="10048995at2759"/>
<dbReference type="Proteomes" id="UP000186698">
    <property type="component" value="Chromosome 6L"/>
</dbReference>
<dbReference type="Bgee" id="100381084">
    <property type="expression patterns" value="Expressed in pancreas and 13 other cell types or tissues"/>
</dbReference>
<dbReference type="GO" id="GO:0005737">
    <property type="term" value="C:cytoplasm"/>
    <property type="evidence" value="ECO:0000250"/>
    <property type="project" value="UniProtKB"/>
</dbReference>
<dbReference type="GO" id="GO:0005634">
    <property type="term" value="C:nucleus"/>
    <property type="evidence" value="ECO:0000250"/>
    <property type="project" value="UniProtKB"/>
</dbReference>
<dbReference type="GO" id="GO:0005667">
    <property type="term" value="C:transcription regulator complex"/>
    <property type="evidence" value="ECO:0000250"/>
    <property type="project" value="UniProtKB"/>
</dbReference>
<dbReference type="GO" id="GO:0003677">
    <property type="term" value="F:DNA binding"/>
    <property type="evidence" value="ECO:0000250"/>
    <property type="project" value="UniProtKB"/>
</dbReference>
<dbReference type="GO" id="GO:0000981">
    <property type="term" value="F:DNA-binding transcription factor activity, RNA polymerase II-specific"/>
    <property type="evidence" value="ECO:0000318"/>
    <property type="project" value="GO_Central"/>
</dbReference>
<dbReference type="GO" id="GO:0046983">
    <property type="term" value="F:protein dimerization activity"/>
    <property type="evidence" value="ECO:0007669"/>
    <property type="project" value="InterPro"/>
</dbReference>
<dbReference type="GO" id="GO:0000977">
    <property type="term" value="F:RNA polymerase II transcription regulatory region sequence-specific DNA binding"/>
    <property type="evidence" value="ECO:0000318"/>
    <property type="project" value="GO_Central"/>
</dbReference>
<dbReference type="GO" id="GO:0032502">
    <property type="term" value="P:developmental process"/>
    <property type="evidence" value="ECO:0000318"/>
    <property type="project" value="GO_Central"/>
</dbReference>
<dbReference type="GO" id="GO:0031017">
    <property type="term" value="P:exocrine pancreas development"/>
    <property type="evidence" value="ECO:0000250"/>
    <property type="project" value="UniProtKB"/>
</dbReference>
<dbReference type="GO" id="GO:0048699">
    <property type="term" value="P:generation of neurons"/>
    <property type="evidence" value="ECO:0000250"/>
    <property type="project" value="UniProtKB"/>
</dbReference>
<dbReference type="GO" id="GO:0030902">
    <property type="term" value="P:hindbrain development"/>
    <property type="evidence" value="ECO:0000250"/>
    <property type="project" value="UniProtKB"/>
</dbReference>
<dbReference type="GO" id="GO:0045893">
    <property type="term" value="P:positive regulation of DNA-templated transcription"/>
    <property type="evidence" value="ECO:0000250"/>
    <property type="project" value="UniProtKB"/>
</dbReference>
<dbReference type="GO" id="GO:0006355">
    <property type="term" value="P:regulation of DNA-templated transcription"/>
    <property type="evidence" value="ECO:0000250"/>
    <property type="project" value="UniProtKB"/>
</dbReference>
<dbReference type="GO" id="GO:0006357">
    <property type="term" value="P:regulation of transcription by RNA polymerase II"/>
    <property type="evidence" value="ECO:0000318"/>
    <property type="project" value="GO_Central"/>
</dbReference>
<dbReference type="GO" id="GO:0048384">
    <property type="term" value="P:retinoic acid receptor signaling pathway"/>
    <property type="evidence" value="ECO:0000250"/>
    <property type="project" value="UniProtKB"/>
</dbReference>
<dbReference type="GO" id="GO:0009888">
    <property type="term" value="P:tissue development"/>
    <property type="evidence" value="ECO:0000250"/>
    <property type="project" value="UniProtKB"/>
</dbReference>
<dbReference type="CDD" id="cd11417">
    <property type="entry name" value="bHLH_TS_PTF1A"/>
    <property type="match status" value="1"/>
</dbReference>
<dbReference type="FunFam" id="4.10.280.10:FF:000035">
    <property type="entry name" value="Pancreas-specific transcription factor 1a"/>
    <property type="match status" value="1"/>
</dbReference>
<dbReference type="Gene3D" id="4.10.280.10">
    <property type="entry name" value="Helix-loop-helix DNA-binding domain"/>
    <property type="match status" value="1"/>
</dbReference>
<dbReference type="InterPro" id="IPR011598">
    <property type="entry name" value="bHLH_dom"/>
</dbReference>
<dbReference type="InterPro" id="IPR050283">
    <property type="entry name" value="E-box_TF_Regulators"/>
</dbReference>
<dbReference type="InterPro" id="IPR036638">
    <property type="entry name" value="HLH_DNA-bd_sf"/>
</dbReference>
<dbReference type="PANTHER" id="PTHR23349">
    <property type="entry name" value="BASIC HELIX-LOOP-HELIX TRANSCRIPTION FACTOR, TWIST"/>
    <property type="match status" value="1"/>
</dbReference>
<dbReference type="PANTHER" id="PTHR23349:SF59">
    <property type="entry name" value="PANCREAS TRANSCRIPTION FACTOR 1 SUBUNIT ALPHA"/>
    <property type="match status" value="1"/>
</dbReference>
<dbReference type="Pfam" id="PF00010">
    <property type="entry name" value="HLH"/>
    <property type="match status" value="1"/>
</dbReference>
<dbReference type="SMART" id="SM00353">
    <property type="entry name" value="HLH"/>
    <property type="match status" value="1"/>
</dbReference>
<dbReference type="SUPFAM" id="SSF47459">
    <property type="entry name" value="HLH, helix-loop-helix DNA-binding domain"/>
    <property type="match status" value="1"/>
</dbReference>
<dbReference type="PROSITE" id="PS50888">
    <property type="entry name" value="BHLH"/>
    <property type="match status" value="1"/>
</dbReference>
<sequence>METVLEQLAGLESFPSPYFDEDDFFTDHSSRDALDADDFLEDDVDFLAGQIQDYYRDSRVLHTDDDYCDAGNFSFSSSSSGGFPYECGDGGCDLSPGMKGGSLVMKRRRRLRSDAEMQQLRQAANVRERRRMQSINDAFEGLRSHIPTLPYEKRLSKVDTLRLAIGYINFLSEMVQSDLPLRNPNSDSGNQPKKVIICHRGTRSPSPSDPDYGLPPLAGHSLSWTDEKQLRDQNVVRTAKVWTPEDPRKLNKSPFSNIENEPPLTLCLDM</sequence>